<gene>
    <name evidence="3" type="primary">Arx</name>
</gene>
<accession>A6YP92</accession>
<organism>
    <name type="scientific">Rattus norvegicus</name>
    <name type="common">Rat</name>
    <dbReference type="NCBI Taxonomy" id="10116"/>
    <lineage>
        <taxon>Eukaryota</taxon>
        <taxon>Metazoa</taxon>
        <taxon>Chordata</taxon>
        <taxon>Craniata</taxon>
        <taxon>Vertebrata</taxon>
        <taxon>Euteleostomi</taxon>
        <taxon>Mammalia</taxon>
        <taxon>Eutheria</taxon>
        <taxon>Euarchontoglires</taxon>
        <taxon>Glires</taxon>
        <taxon>Rodentia</taxon>
        <taxon>Myomorpha</taxon>
        <taxon>Muroidea</taxon>
        <taxon>Muridae</taxon>
        <taxon>Murinae</taxon>
        <taxon>Rattus</taxon>
    </lineage>
</organism>
<sequence length="566" mass="58647">MSNQYQEEGCSERPECKSKSPTLLSSYCIDSILGRRSPCKMRLLGAAQSLPAPLASRTDQEKAMQGSPKGSSAPFEAELHLPPKLRRLYGPGGGRLLQGAAAAAAAAAAAAAAAATATGTAGPRGEVPPPPPPAARPGERQDSAGAVAAAAAAAWDTLKISQAPQVSISRSKSYRENGAPFVPPPPALDELGGPGGVAHPEERLSAASGPGSAPAAGGGTGTEEDEEELLEDEEDEDEEEELLEDDEEELLEDDARALLKEPRRCSVATTGTVAAAAAAAAAAAAVATEGGELSPKEELLLHPEDAEGKDGEDSVCLSAGSDSEEGLLKRKQRRYRTTFTSYQLEELERAFQKTHYPDVFTREELAMRLDLTEARVQVWFQNRRAKWRKREKAGAQTHPPGLPFPGPLSATHPLSPYLDASPFPPHHPALDSAWTAAAAAAAAAFPSLPPPPGSASLPPSGAPLGLSTFLGAAVFRHPAFISPAFGRLFSTMAPLTSASTAAALLRQPTPAVEGAVASGALADPATAAADRRASSIAALRLKAKEHAAQLTQLNILPGTSTGKEVC</sequence>
<reference evidence="8" key="1">
    <citation type="submission" date="2007-05" db="EMBL/GenBank/DDBJ databases">
        <title>ARX RNA interference in vivo induced cortical developmental disorders.</title>
        <authorList>
            <person name="Nardou R."/>
            <person name="Acquaviva L."/>
            <person name="Corby S."/>
            <person name="Khantane S."/>
            <person name="Represa A."/>
            <person name="Cardoso C."/>
        </authorList>
    </citation>
    <scope>NUCLEOTIDE SEQUENCE [MRNA]</scope>
    <source>
        <strain evidence="8">Wistar</strain>
    </source>
</reference>
<proteinExistence type="evidence at transcript level"/>
<feature type="chain" id="PRO_0000307920" description="Homeobox protein ARX">
    <location>
        <begin position="1"/>
        <end position="566"/>
    </location>
</feature>
<feature type="DNA-binding region" description="Homeobox" evidence="5">
    <location>
        <begin position="332"/>
        <end position="391"/>
    </location>
</feature>
<feature type="region of interest" description="Disordered" evidence="7">
    <location>
        <begin position="1"/>
        <end position="21"/>
    </location>
</feature>
<feature type="region of interest" description="Disordered" evidence="7">
    <location>
        <begin position="50"/>
        <end position="79"/>
    </location>
</feature>
<feature type="region of interest" description="Disordered" evidence="7">
    <location>
        <begin position="119"/>
        <end position="264"/>
    </location>
</feature>
<feature type="region of interest" description="Disordered" evidence="7">
    <location>
        <begin position="286"/>
        <end position="319"/>
    </location>
</feature>
<feature type="short sequence motif" description="OAR" evidence="6">
    <location>
        <begin position="534"/>
        <end position="547"/>
    </location>
</feature>
<feature type="compositionally biased region" description="Pro residues" evidence="7">
    <location>
        <begin position="126"/>
        <end position="135"/>
    </location>
</feature>
<feature type="compositionally biased region" description="Low complexity" evidence="7">
    <location>
        <begin position="144"/>
        <end position="154"/>
    </location>
</feature>
<feature type="compositionally biased region" description="Polar residues" evidence="7">
    <location>
        <begin position="159"/>
        <end position="171"/>
    </location>
</feature>
<feature type="compositionally biased region" description="Low complexity" evidence="7">
    <location>
        <begin position="205"/>
        <end position="215"/>
    </location>
</feature>
<feature type="compositionally biased region" description="Acidic residues" evidence="7">
    <location>
        <begin position="222"/>
        <end position="252"/>
    </location>
</feature>
<feature type="compositionally biased region" description="Basic and acidic residues" evidence="7">
    <location>
        <begin position="253"/>
        <end position="264"/>
    </location>
</feature>
<feature type="compositionally biased region" description="Basic and acidic residues" evidence="7">
    <location>
        <begin position="294"/>
        <end position="312"/>
    </location>
</feature>
<dbReference type="EMBL" id="EF638804">
    <property type="protein sequence ID" value="ABR27821.1"/>
    <property type="molecule type" value="mRNA"/>
</dbReference>
<dbReference type="RefSeq" id="NP_001093644.1">
    <property type="nucleotide sequence ID" value="NM_001100174.1"/>
</dbReference>
<dbReference type="SMR" id="A6YP92"/>
<dbReference type="FunCoup" id="A6YP92">
    <property type="interactions" value="383"/>
</dbReference>
<dbReference type="STRING" id="10116.ENSRNOP00000075250"/>
<dbReference type="PhosphoSitePlus" id="A6YP92"/>
<dbReference type="PaxDb" id="10116-ENSRNOP00000044306"/>
<dbReference type="ABCD" id="A6YP92">
    <property type="antibodies" value="1 sequenced antibody"/>
</dbReference>
<dbReference type="Ensembl" id="ENSRNOT00000089828.2">
    <property type="protein sequence ID" value="ENSRNOP00000071239.2"/>
    <property type="gene ID" value="ENSRNOG00000053562.2"/>
</dbReference>
<dbReference type="GeneID" id="317268"/>
<dbReference type="KEGG" id="rno:317268"/>
<dbReference type="AGR" id="RGD:1562672"/>
<dbReference type="CTD" id="170302"/>
<dbReference type="RGD" id="1562672">
    <property type="gene designation" value="Arx"/>
</dbReference>
<dbReference type="eggNOG" id="KOG0490">
    <property type="taxonomic scope" value="Eukaryota"/>
</dbReference>
<dbReference type="GeneTree" id="ENSGT00940000160633"/>
<dbReference type="InParanoid" id="A6YP92"/>
<dbReference type="OMA" id="SYREHAL"/>
<dbReference type="OrthoDB" id="6159439at2759"/>
<dbReference type="PhylomeDB" id="A6YP92"/>
<dbReference type="PRO" id="PR:A6YP92"/>
<dbReference type="Proteomes" id="UP000002494">
    <property type="component" value="Chromosome X"/>
</dbReference>
<dbReference type="GO" id="GO:0005634">
    <property type="term" value="C:nucleus"/>
    <property type="evidence" value="ECO:0000266"/>
    <property type="project" value="RGD"/>
</dbReference>
<dbReference type="GO" id="GO:0003682">
    <property type="term" value="F:chromatin binding"/>
    <property type="evidence" value="ECO:0000266"/>
    <property type="project" value="RGD"/>
</dbReference>
<dbReference type="GO" id="GO:0001228">
    <property type="term" value="F:DNA-binding transcription activator activity, RNA polymerase II-specific"/>
    <property type="evidence" value="ECO:0000266"/>
    <property type="project" value="RGD"/>
</dbReference>
<dbReference type="GO" id="GO:0000981">
    <property type="term" value="F:DNA-binding transcription factor activity, RNA polymerase II-specific"/>
    <property type="evidence" value="ECO:0000266"/>
    <property type="project" value="RGD"/>
</dbReference>
<dbReference type="GO" id="GO:0001227">
    <property type="term" value="F:DNA-binding transcription repressor activity, RNA polymerase II-specific"/>
    <property type="evidence" value="ECO:0000266"/>
    <property type="project" value="RGD"/>
</dbReference>
<dbReference type="GO" id="GO:0000978">
    <property type="term" value="F:RNA polymerase II cis-regulatory region sequence-specific DNA binding"/>
    <property type="evidence" value="ECO:0000266"/>
    <property type="project" value="RGD"/>
</dbReference>
<dbReference type="GO" id="GO:0000977">
    <property type="term" value="F:RNA polymerase II transcription regulatory region sequence-specific DNA binding"/>
    <property type="evidence" value="ECO:0000318"/>
    <property type="project" value="GO_Central"/>
</dbReference>
<dbReference type="GO" id="GO:1990837">
    <property type="term" value="F:sequence-specific double-stranded DNA binding"/>
    <property type="evidence" value="ECO:0000266"/>
    <property type="project" value="RGD"/>
</dbReference>
<dbReference type="GO" id="GO:0007411">
    <property type="term" value="P:axon guidance"/>
    <property type="evidence" value="ECO:0000266"/>
    <property type="project" value="RGD"/>
</dbReference>
<dbReference type="GO" id="GO:0021846">
    <property type="term" value="P:cell proliferation in forebrain"/>
    <property type="evidence" value="ECO:0000266"/>
    <property type="project" value="RGD"/>
</dbReference>
<dbReference type="GO" id="GO:0021853">
    <property type="term" value="P:cerebral cortex GABAergic interneuron migration"/>
    <property type="evidence" value="ECO:0000266"/>
    <property type="project" value="RGD"/>
</dbReference>
<dbReference type="GO" id="GO:0021800">
    <property type="term" value="P:cerebral cortex tangential migration"/>
    <property type="evidence" value="ECO:0000266"/>
    <property type="project" value="RGD"/>
</dbReference>
<dbReference type="GO" id="GO:0021831">
    <property type="term" value="P:embryonic olfactory bulb interneuron precursor migration"/>
    <property type="evidence" value="ECO:0000266"/>
    <property type="project" value="RGD"/>
</dbReference>
<dbReference type="GO" id="GO:0072148">
    <property type="term" value="P:epithelial cell fate commitment"/>
    <property type="evidence" value="ECO:0000266"/>
    <property type="project" value="RGD"/>
</dbReference>
<dbReference type="GO" id="GO:0030900">
    <property type="term" value="P:forebrain development"/>
    <property type="evidence" value="ECO:0000266"/>
    <property type="project" value="RGD"/>
</dbReference>
<dbReference type="GO" id="GO:0021759">
    <property type="term" value="P:globus pallidus development"/>
    <property type="evidence" value="ECO:0000266"/>
    <property type="project" value="RGD"/>
</dbReference>
<dbReference type="GO" id="GO:1904936">
    <property type="term" value="P:interneuron migration"/>
    <property type="evidence" value="ECO:0000266"/>
    <property type="project" value="RGD"/>
</dbReference>
<dbReference type="GO" id="GO:0044241">
    <property type="term" value="P:lipid digestion"/>
    <property type="evidence" value="ECO:0000266"/>
    <property type="project" value="RGD"/>
</dbReference>
<dbReference type="GO" id="GO:0000122">
    <property type="term" value="P:negative regulation of transcription by RNA polymerase II"/>
    <property type="evidence" value="ECO:0000266"/>
    <property type="project" value="RGD"/>
</dbReference>
<dbReference type="GO" id="GO:0048666">
    <property type="term" value="P:neuron development"/>
    <property type="evidence" value="ECO:0000270"/>
    <property type="project" value="RGD"/>
</dbReference>
<dbReference type="GO" id="GO:0048663">
    <property type="term" value="P:neuron fate commitment"/>
    <property type="evidence" value="ECO:0007669"/>
    <property type="project" value="Ensembl"/>
</dbReference>
<dbReference type="GO" id="GO:0001764">
    <property type="term" value="P:neuron migration"/>
    <property type="evidence" value="ECO:0000266"/>
    <property type="project" value="RGD"/>
</dbReference>
<dbReference type="GO" id="GO:0021772">
    <property type="term" value="P:olfactory bulb development"/>
    <property type="evidence" value="ECO:0000266"/>
    <property type="project" value="RGD"/>
</dbReference>
<dbReference type="GO" id="GO:0035265">
    <property type="term" value="P:organ growth"/>
    <property type="evidence" value="ECO:0000266"/>
    <property type="project" value="RGD"/>
</dbReference>
<dbReference type="GO" id="GO:0010628">
    <property type="term" value="P:positive regulation of gene expression"/>
    <property type="evidence" value="ECO:0000266"/>
    <property type="project" value="RGD"/>
</dbReference>
<dbReference type="GO" id="GO:0046622">
    <property type="term" value="P:positive regulation of organ growth"/>
    <property type="evidence" value="ECO:0000266"/>
    <property type="project" value="RGD"/>
</dbReference>
<dbReference type="GO" id="GO:0045944">
    <property type="term" value="P:positive regulation of transcription by RNA polymerase II"/>
    <property type="evidence" value="ECO:0000266"/>
    <property type="project" value="RGD"/>
</dbReference>
<dbReference type="GO" id="GO:0050678">
    <property type="term" value="P:regulation of epithelial cell proliferation"/>
    <property type="evidence" value="ECO:0000266"/>
    <property type="project" value="RGD"/>
</dbReference>
<dbReference type="GO" id="GO:0006357">
    <property type="term" value="P:regulation of transcription by RNA polymerase II"/>
    <property type="evidence" value="ECO:0000318"/>
    <property type="project" value="GO_Central"/>
</dbReference>
<dbReference type="CDD" id="cd00086">
    <property type="entry name" value="homeodomain"/>
    <property type="match status" value="1"/>
</dbReference>
<dbReference type="FunFam" id="1.10.10.60:FF:000102">
    <property type="entry name" value="Aristaless related homeobox"/>
    <property type="match status" value="1"/>
</dbReference>
<dbReference type="Gene3D" id="1.10.10.60">
    <property type="entry name" value="Homeodomain-like"/>
    <property type="match status" value="1"/>
</dbReference>
<dbReference type="InterPro" id="IPR001356">
    <property type="entry name" value="HD"/>
</dbReference>
<dbReference type="InterPro" id="IPR017970">
    <property type="entry name" value="Homeobox_CS"/>
</dbReference>
<dbReference type="InterPro" id="IPR009057">
    <property type="entry name" value="Homeodomain-like_sf"/>
</dbReference>
<dbReference type="InterPro" id="IPR003654">
    <property type="entry name" value="OAR_dom"/>
</dbReference>
<dbReference type="InterPro" id="IPR050649">
    <property type="entry name" value="Paired_Homeobox_TFs"/>
</dbReference>
<dbReference type="PANTHER" id="PTHR24329:SF337">
    <property type="entry name" value="ARISTALESS RELATED HOMEOBOX"/>
    <property type="match status" value="1"/>
</dbReference>
<dbReference type="PANTHER" id="PTHR24329">
    <property type="entry name" value="HOMEOBOX PROTEIN ARISTALESS"/>
    <property type="match status" value="1"/>
</dbReference>
<dbReference type="Pfam" id="PF00046">
    <property type="entry name" value="Homeodomain"/>
    <property type="match status" value="1"/>
</dbReference>
<dbReference type="Pfam" id="PF03826">
    <property type="entry name" value="OAR"/>
    <property type="match status" value="1"/>
</dbReference>
<dbReference type="SMART" id="SM00389">
    <property type="entry name" value="HOX"/>
    <property type="match status" value="1"/>
</dbReference>
<dbReference type="SUPFAM" id="SSF46689">
    <property type="entry name" value="Homeodomain-like"/>
    <property type="match status" value="1"/>
</dbReference>
<dbReference type="PROSITE" id="PS00027">
    <property type="entry name" value="HOMEOBOX_1"/>
    <property type="match status" value="1"/>
</dbReference>
<dbReference type="PROSITE" id="PS50071">
    <property type="entry name" value="HOMEOBOX_2"/>
    <property type="match status" value="1"/>
</dbReference>
<dbReference type="PROSITE" id="PS50803">
    <property type="entry name" value="OAR"/>
    <property type="match status" value="1"/>
</dbReference>
<keyword id="KW-0217">Developmental protein</keyword>
<keyword id="KW-0221">Differentiation</keyword>
<keyword id="KW-0238">DNA-binding</keyword>
<keyword id="KW-0371">Homeobox</keyword>
<keyword id="KW-0524">Neurogenesis</keyword>
<keyword id="KW-0539">Nucleus</keyword>
<keyword id="KW-1185">Reference proteome</keyword>
<keyword id="KW-0804">Transcription</keyword>
<keyword id="KW-0805">Transcription regulation</keyword>
<name>ARX_RAT</name>
<protein>
    <recommendedName>
        <fullName>Homeobox protein ARX</fullName>
    </recommendedName>
    <alternativeName>
        <fullName>Aristaless-related homeobox</fullName>
    </alternativeName>
</protein>
<evidence type="ECO:0000250" key="1">
    <source>
        <dbReference type="UniProtKB" id="O35085"/>
    </source>
</evidence>
<evidence type="ECO:0000250" key="2">
    <source>
        <dbReference type="UniProtKB" id="O35137"/>
    </source>
</evidence>
<evidence type="ECO:0000250" key="3">
    <source>
        <dbReference type="UniProtKB" id="Q96QS3"/>
    </source>
</evidence>
<evidence type="ECO:0000255" key="4"/>
<evidence type="ECO:0000255" key="5">
    <source>
        <dbReference type="PROSITE-ProRule" id="PRU00108"/>
    </source>
</evidence>
<evidence type="ECO:0000255" key="6">
    <source>
        <dbReference type="PROSITE-ProRule" id="PRU00138"/>
    </source>
</evidence>
<evidence type="ECO:0000256" key="7">
    <source>
        <dbReference type="SAM" id="MobiDB-lite"/>
    </source>
</evidence>
<evidence type="ECO:0000312" key="8">
    <source>
        <dbReference type="EMBL" id="ABR27821.1"/>
    </source>
</evidence>
<comment type="function">
    <text evidence="1 3">Transcription factor. Binds to specific sequence motif 5'-TAATTA-3' in regulatory elements of target genes, such as histone demethylase KDM5C. Positively modulates transcription of KDM5C. Activates expression of KDM5C synergistically with histone lysine demethylase PHF8 and perhaps in competition with transcription regulator ZNF711; synergy may be related to enrichment of histone H3K4me3 in regulatory elements. Required for normal brain development (By similarity). Plays a role in neuronal proliferation, interneuronal migration and differentiation in the embryonic forebrain. May also be involved in axonal guidance in the floor plate (By similarity).</text>
</comment>
<comment type="subcellular location">
    <subcellularLocation>
        <location evidence="2 5 6">Nucleus</location>
    </subcellularLocation>
</comment>
<comment type="similarity">
    <text evidence="4">Belongs to the paired homeobox family. Bicoid subfamily.</text>
</comment>